<dbReference type="EMBL" id="AY059394">
    <property type="protein sequence ID" value="AAL29692.1"/>
    <property type="molecule type" value="mRNA"/>
</dbReference>
<dbReference type="CCDS" id="CCDS20951.1"/>
<dbReference type="RefSeq" id="NP_694752.1">
    <property type="nucleotide sequence ID" value="NM_153112.3"/>
</dbReference>
<dbReference type="PDB" id="5ZO1">
    <property type="method" value="X-ray"/>
    <property type="resolution" value="2.20 A"/>
    <property type="chains" value="A=25-317"/>
</dbReference>
<dbReference type="PDB" id="5ZO2">
    <property type="method" value="X-ray"/>
    <property type="resolution" value="3.29 A"/>
    <property type="chains" value="A/C=25-317"/>
</dbReference>
<dbReference type="PDBsum" id="5ZO1"/>
<dbReference type="PDBsum" id="5ZO2"/>
<dbReference type="SMR" id="Q8R464"/>
<dbReference type="BioGRID" id="234426">
    <property type="interactions" value="3"/>
</dbReference>
<dbReference type="FunCoup" id="Q8R464">
    <property type="interactions" value="174"/>
</dbReference>
<dbReference type="IntAct" id="Q8R464">
    <property type="interactions" value="1"/>
</dbReference>
<dbReference type="STRING" id="10090.ENSMUSP00000066880"/>
<dbReference type="GlyConnect" id="2200">
    <property type="glycosylation" value="11 N-Linked glycans (3 sites)"/>
</dbReference>
<dbReference type="GlyCosmos" id="Q8R464">
    <property type="glycosylation" value="4 sites, 11 glycans"/>
</dbReference>
<dbReference type="GlyGen" id="Q8R464">
    <property type="glycosylation" value="5 sites, 15 N-linked glycans (4 sites), 1 O-linked glycan (1 site)"/>
</dbReference>
<dbReference type="iPTMnet" id="Q8R464"/>
<dbReference type="PhosphoSitePlus" id="Q8R464"/>
<dbReference type="SwissPalm" id="Q8R464"/>
<dbReference type="jPOST" id="Q8R464"/>
<dbReference type="PaxDb" id="10090-ENSMUSP00000066880"/>
<dbReference type="PeptideAtlas" id="Q8R464"/>
<dbReference type="ProteomicsDB" id="265500"/>
<dbReference type="ABCD" id="Q8R464">
    <property type="antibodies" value="1 sequenced antibody"/>
</dbReference>
<dbReference type="Antibodypedia" id="2174">
    <property type="antibodies" value="289 antibodies from 41 providers"/>
</dbReference>
<dbReference type="DNASU" id="260299"/>
<dbReference type="Ensembl" id="ENSMUST00000068023.8">
    <property type="protein sequence ID" value="ENSMUSP00000066880.8"/>
    <property type="gene ID" value="ENSMUSG00000054793.9"/>
</dbReference>
<dbReference type="GeneID" id="260299"/>
<dbReference type="KEGG" id="mmu:260299"/>
<dbReference type="UCSC" id="uc009fps.1">
    <property type="organism name" value="mouse"/>
</dbReference>
<dbReference type="AGR" id="MGI:2449088"/>
<dbReference type="CTD" id="199731"/>
<dbReference type="MGI" id="MGI:2449088">
    <property type="gene designation" value="Cadm4"/>
</dbReference>
<dbReference type="VEuPathDB" id="HostDB:ENSMUSG00000054793"/>
<dbReference type="eggNOG" id="ENOG502RFJZ">
    <property type="taxonomic scope" value="Eukaryota"/>
</dbReference>
<dbReference type="GeneTree" id="ENSGT00940000161223"/>
<dbReference type="HOGENOM" id="CLU_047574_2_0_1"/>
<dbReference type="InParanoid" id="Q8R464"/>
<dbReference type="OMA" id="IQNPVRQ"/>
<dbReference type="OrthoDB" id="10028801at2759"/>
<dbReference type="PhylomeDB" id="Q8R464"/>
<dbReference type="TreeFam" id="TF338300"/>
<dbReference type="BioGRID-ORCS" id="260299">
    <property type="hits" value="6 hits in 78 CRISPR screens"/>
</dbReference>
<dbReference type="CD-CODE" id="CE726F99">
    <property type="entry name" value="Postsynaptic density"/>
</dbReference>
<dbReference type="ChiTaRS" id="Cadm4">
    <property type="organism name" value="mouse"/>
</dbReference>
<dbReference type="PRO" id="PR:Q8R464"/>
<dbReference type="Proteomes" id="UP000000589">
    <property type="component" value="Chromosome 7"/>
</dbReference>
<dbReference type="RNAct" id="Q8R464">
    <property type="molecule type" value="protein"/>
</dbReference>
<dbReference type="Bgee" id="ENSMUSG00000054793">
    <property type="expression patterns" value="Expressed in embryonic brain and 209 other cell types or tissues"/>
</dbReference>
<dbReference type="GO" id="GO:0031252">
    <property type="term" value="C:cell leading edge"/>
    <property type="evidence" value="ECO:0000250"/>
    <property type="project" value="UniProtKB"/>
</dbReference>
<dbReference type="GO" id="GO:0044291">
    <property type="term" value="C:cell-cell contact zone"/>
    <property type="evidence" value="ECO:0000250"/>
    <property type="project" value="UniProtKB"/>
</dbReference>
<dbReference type="GO" id="GO:0016020">
    <property type="term" value="C:membrane"/>
    <property type="evidence" value="ECO:0007669"/>
    <property type="project" value="UniProtKB-SubCell"/>
</dbReference>
<dbReference type="GO" id="GO:0019903">
    <property type="term" value="F:protein phosphatase binding"/>
    <property type="evidence" value="ECO:0000353"/>
    <property type="project" value="UniProtKB"/>
</dbReference>
<dbReference type="GO" id="GO:0030971">
    <property type="term" value="F:receptor tyrosine kinase binding"/>
    <property type="evidence" value="ECO:0000353"/>
    <property type="project" value="UniProtKB"/>
</dbReference>
<dbReference type="GO" id="GO:0043183">
    <property type="term" value="F:vascular endothelial growth factor receptor 1 binding"/>
    <property type="evidence" value="ECO:0000353"/>
    <property type="project" value="UniProtKB"/>
</dbReference>
<dbReference type="GO" id="GO:0043184">
    <property type="term" value="F:vascular endothelial growth factor receptor 2 binding"/>
    <property type="evidence" value="ECO:0000353"/>
    <property type="project" value="UniProtKB"/>
</dbReference>
<dbReference type="GO" id="GO:0007155">
    <property type="term" value="P:cell adhesion"/>
    <property type="evidence" value="ECO:0007669"/>
    <property type="project" value="UniProtKB-KW"/>
</dbReference>
<dbReference type="GO" id="GO:0010801">
    <property type="term" value="P:negative regulation of peptidyl-threonine phosphorylation"/>
    <property type="evidence" value="ECO:0000315"/>
    <property type="project" value="UniProtKB"/>
</dbReference>
<dbReference type="GO" id="GO:0050732">
    <property type="term" value="P:negative regulation of peptidyl-tyrosine phosphorylation"/>
    <property type="evidence" value="ECO:0000315"/>
    <property type="project" value="UniProtKB"/>
</dbReference>
<dbReference type="GO" id="GO:0001933">
    <property type="term" value="P:negative regulation of protein phosphorylation"/>
    <property type="evidence" value="ECO:0000315"/>
    <property type="project" value="UniProtKB"/>
</dbReference>
<dbReference type="GO" id="GO:0030948">
    <property type="term" value="P:negative regulation of vascular endothelial growth factor receptor signaling pathway"/>
    <property type="evidence" value="ECO:0000315"/>
    <property type="project" value="UniProtKB"/>
</dbReference>
<dbReference type="GO" id="GO:1900747">
    <property type="term" value="P:negative regulation of vascular endothelial growth factor signaling pathway"/>
    <property type="evidence" value="ECO:0000315"/>
    <property type="project" value="UniProtKB"/>
</dbReference>
<dbReference type="GO" id="GO:2000145">
    <property type="term" value="P:regulation of cell motility"/>
    <property type="evidence" value="ECO:0000315"/>
    <property type="project" value="UniProtKB"/>
</dbReference>
<dbReference type="GO" id="GO:0042127">
    <property type="term" value="P:regulation of cell population proliferation"/>
    <property type="evidence" value="ECO:0000315"/>
    <property type="project" value="UniProtKB"/>
</dbReference>
<dbReference type="GO" id="GO:0001932">
    <property type="term" value="P:regulation of protein phosphorylation"/>
    <property type="evidence" value="ECO:0000315"/>
    <property type="project" value="UniProtKB"/>
</dbReference>
<dbReference type="GO" id="GO:0035020">
    <property type="term" value="P:regulation of Rac protein signal transduction"/>
    <property type="evidence" value="ECO:0000315"/>
    <property type="project" value="UniProtKB"/>
</dbReference>
<dbReference type="GO" id="GO:0061041">
    <property type="term" value="P:regulation of wound healing"/>
    <property type="evidence" value="ECO:0000315"/>
    <property type="project" value="UniProtKB"/>
</dbReference>
<dbReference type="CDD" id="cd05885">
    <property type="entry name" value="IgI_2_Necl-4"/>
    <property type="match status" value="1"/>
</dbReference>
<dbReference type="DisProt" id="DP02679"/>
<dbReference type="FunFam" id="2.60.40.10:FF:000013">
    <property type="entry name" value="cell adhesion molecule 1 isoform X1"/>
    <property type="match status" value="1"/>
</dbReference>
<dbReference type="FunFam" id="2.60.40.10:FF:000588">
    <property type="entry name" value="Cell adhesion molecule 4"/>
    <property type="match status" value="1"/>
</dbReference>
<dbReference type="FunFam" id="2.60.40.10:FF:000589">
    <property type="entry name" value="cell adhesion molecule 4"/>
    <property type="match status" value="1"/>
</dbReference>
<dbReference type="Gene3D" id="2.60.40.10">
    <property type="entry name" value="Immunoglobulins"/>
    <property type="match status" value="3"/>
</dbReference>
<dbReference type="InterPro" id="IPR013162">
    <property type="entry name" value="CD80_C2-set"/>
</dbReference>
<dbReference type="InterPro" id="IPR007110">
    <property type="entry name" value="Ig-like_dom"/>
</dbReference>
<dbReference type="InterPro" id="IPR036179">
    <property type="entry name" value="Ig-like_dom_sf"/>
</dbReference>
<dbReference type="InterPro" id="IPR013783">
    <property type="entry name" value="Ig-like_fold"/>
</dbReference>
<dbReference type="InterPro" id="IPR003599">
    <property type="entry name" value="Ig_sub"/>
</dbReference>
<dbReference type="InterPro" id="IPR003598">
    <property type="entry name" value="Ig_sub2"/>
</dbReference>
<dbReference type="InterPro" id="IPR013106">
    <property type="entry name" value="Ig_V-set"/>
</dbReference>
<dbReference type="InterPro" id="IPR003585">
    <property type="entry name" value="Neurexin-like"/>
</dbReference>
<dbReference type="PANTHER" id="PTHR45889:SF3">
    <property type="entry name" value="CELL ADHESION MOLECULE 4"/>
    <property type="match status" value="1"/>
</dbReference>
<dbReference type="PANTHER" id="PTHR45889">
    <property type="entry name" value="IG-LIKE DOMAIN-CONTAINING PROTEIN"/>
    <property type="match status" value="1"/>
</dbReference>
<dbReference type="Pfam" id="PF08205">
    <property type="entry name" value="C2-set_2"/>
    <property type="match status" value="1"/>
</dbReference>
<dbReference type="Pfam" id="PF13927">
    <property type="entry name" value="Ig_3"/>
    <property type="match status" value="1"/>
</dbReference>
<dbReference type="Pfam" id="PF07686">
    <property type="entry name" value="V-set"/>
    <property type="match status" value="1"/>
</dbReference>
<dbReference type="SMART" id="SM00294">
    <property type="entry name" value="4.1m"/>
    <property type="match status" value="1"/>
</dbReference>
<dbReference type="SMART" id="SM00409">
    <property type="entry name" value="IG"/>
    <property type="match status" value="3"/>
</dbReference>
<dbReference type="SMART" id="SM00408">
    <property type="entry name" value="IGc2"/>
    <property type="match status" value="2"/>
</dbReference>
<dbReference type="SUPFAM" id="SSF48726">
    <property type="entry name" value="Immunoglobulin"/>
    <property type="match status" value="3"/>
</dbReference>
<dbReference type="PROSITE" id="PS50835">
    <property type="entry name" value="IG_LIKE"/>
    <property type="match status" value="2"/>
</dbReference>
<evidence type="ECO:0000250" key="1"/>
<evidence type="ECO:0000255" key="2"/>
<evidence type="ECO:0000255" key="3">
    <source>
        <dbReference type="PROSITE-ProRule" id="PRU00114"/>
    </source>
</evidence>
<evidence type="ECO:0000269" key="4">
    <source>
    </source>
</evidence>
<evidence type="ECO:0000269" key="5">
    <source>
    </source>
</evidence>
<evidence type="ECO:0000305" key="6"/>
<evidence type="ECO:0007744" key="7">
    <source>
    </source>
</evidence>
<evidence type="ECO:0007829" key="8">
    <source>
        <dbReference type="PDB" id="5ZO1"/>
    </source>
</evidence>
<evidence type="ECO:0007829" key="9">
    <source>
        <dbReference type="PDB" id="5ZO2"/>
    </source>
</evidence>
<sequence>MGRARRFQWPLLLLWAAAAGPGTGQEVQTENVTVAEGGVAEITCRLHQYDGSIVVIQNPARQTLFFNGTRALKDERFQLEEFSPRRVRIRLSDARLEDEGGYFCQLYTEDTHHQIATLTVLVAPENPVVEVREQAVEGGEVELSCLVPRSRPAAVLRWYRDRKELKGVSSGQENGKVWSVASTVRFRVDRKDDGGIVICEAQNQALPSGHSKQTQYVLDVQYSPTARIHASQAVVREGDTLVLTCAVTGNPRPNQIRWNRGNESLPERAEAVGETLTLPGLVSADNGTYTCEAANKHGHARALYVLVVYDPGAVVEAQTSVPYAIVGGILALLVFLIICVLVGMVWCSVRQKGSYLTHEASGLDEQGEAREAFLNGGDGHKRKEEFFI</sequence>
<reference key="1">
    <citation type="journal article" date="2003" name="Gene">
        <title>Isolation of the mouse Tsll1 and Tsll2 genes, orthologues of the human TSLC1-like genes 1 and 2 (TSLL1 and TSLL2).</title>
        <authorList>
            <person name="Fukami T."/>
            <person name="Satoh H."/>
            <person name="Williams Y.N."/>
            <person name="Masuda M."/>
            <person name="Fukuhara H."/>
            <person name="Maruyama T."/>
            <person name="Yageta M."/>
            <person name="Kuramochi M."/>
            <person name="Takamoto S."/>
            <person name="Murakami Y."/>
        </authorList>
    </citation>
    <scope>NUCLEOTIDE SEQUENCE [MRNA]</scope>
    <scope>FUNCTION</scope>
    <scope>TISSUE SPECIFICITY</scope>
    <source>
        <strain>129/SvJ</strain>
    </source>
</reference>
<reference key="2">
    <citation type="journal article" date="2006" name="Oncogene">
        <title>Cell adhesion and prostate tumor-suppressor activity of TSLL2/IGSF4C, an immunoglobulin superfamily molecule homologous to TSLC1/IGSF4.</title>
        <authorList>
            <person name="Williams Y.N."/>
            <person name="Masuda M."/>
            <person name="Sakurai-Yageta M."/>
            <person name="Maruyama T."/>
            <person name="Shibuya M."/>
            <person name="Murakami Y."/>
        </authorList>
    </citation>
    <scope>GLYCOSYLATION</scope>
</reference>
<reference key="3">
    <citation type="journal article" date="2010" name="Cell">
        <title>A tissue-specific atlas of mouse protein phosphorylation and expression.</title>
        <authorList>
            <person name="Huttlin E.L."/>
            <person name="Jedrychowski M.P."/>
            <person name="Elias J.E."/>
            <person name="Goswami T."/>
            <person name="Rad R."/>
            <person name="Beausoleil S.A."/>
            <person name="Villen J."/>
            <person name="Haas W."/>
            <person name="Sowa M.E."/>
            <person name="Gygi S.P."/>
        </authorList>
    </citation>
    <scope>PHOSPHORYLATION [LARGE SCALE ANALYSIS] AT SER-361</scope>
    <scope>IDENTIFICATION BY MASS SPECTROMETRY [LARGE SCALE ANALYSIS]</scope>
    <source>
        <tissue>Brain</tissue>
        <tissue>Kidney</tissue>
        <tissue>Spleen</tissue>
    </source>
</reference>
<proteinExistence type="evidence at protein level"/>
<comment type="function">
    <text evidence="4">Involved in the cell-cell adhesion. Has calcium- and magnesium-independent cell-cell adhesion activity. May have tumor-suppressor activity.</text>
</comment>
<comment type="subunit">
    <text evidence="1">Monomer and homodimer.</text>
</comment>
<comment type="subcellular location">
    <subcellularLocation>
        <location evidence="6">Membrane</location>
        <topology evidence="6">Single-pass type I membrane protein</topology>
    </subcellularLocation>
</comment>
<comment type="tissue specificity">
    <text evidence="4">Expressed in the brain and several organs including the kidney and liver.</text>
</comment>
<comment type="PTM">
    <text evidence="5">N-glycosylated.</text>
</comment>
<comment type="similarity">
    <text evidence="6">Belongs to the nectin family.</text>
</comment>
<gene>
    <name type="primary">Cadm4</name>
    <name type="synonym">Igsf4c</name>
    <name type="synonym">Necl4</name>
    <name type="synonym">Tsll2</name>
</gene>
<keyword id="KW-0002">3D-structure</keyword>
<keyword id="KW-0130">Cell adhesion</keyword>
<keyword id="KW-1015">Disulfide bond</keyword>
<keyword id="KW-0325">Glycoprotein</keyword>
<keyword id="KW-0393">Immunoglobulin domain</keyword>
<keyword id="KW-0472">Membrane</keyword>
<keyword id="KW-0597">Phosphoprotein</keyword>
<keyword id="KW-1185">Reference proteome</keyword>
<keyword id="KW-0677">Repeat</keyword>
<keyword id="KW-0732">Signal</keyword>
<keyword id="KW-0812">Transmembrane</keyword>
<keyword id="KW-1133">Transmembrane helix</keyword>
<keyword id="KW-0043">Tumor suppressor</keyword>
<organism>
    <name type="scientific">Mus musculus</name>
    <name type="common">Mouse</name>
    <dbReference type="NCBI Taxonomy" id="10090"/>
    <lineage>
        <taxon>Eukaryota</taxon>
        <taxon>Metazoa</taxon>
        <taxon>Chordata</taxon>
        <taxon>Craniata</taxon>
        <taxon>Vertebrata</taxon>
        <taxon>Euteleostomi</taxon>
        <taxon>Mammalia</taxon>
        <taxon>Eutheria</taxon>
        <taxon>Euarchontoglires</taxon>
        <taxon>Glires</taxon>
        <taxon>Rodentia</taxon>
        <taxon>Myomorpha</taxon>
        <taxon>Muroidea</taxon>
        <taxon>Muridae</taxon>
        <taxon>Murinae</taxon>
        <taxon>Mus</taxon>
        <taxon>Mus</taxon>
    </lineage>
</organism>
<protein>
    <recommendedName>
        <fullName>Cell adhesion molecule 4</fullName>
    </recommendedName>
    <alternativeName>
        <fullName>Immunoglobulin superfamily member 4C</fullName>
        <shortName>IgSF4C</shortName>
    </alternativeName>
    <alternativeName>
        <fullName>Nectin-like protein 4</fullName>
        <shortName>NECL-4</shortName>
    </alternativeName>
    <alternativeName>
        <fullName>TSLC1-like protein 2</fullName>
    </alternativeName>
</protein>
<name>CADM4_MOUSE</name>
<feature type="signal peptide" evidence="2">
    <location>
        <begin position="1"/>
        <end position="20"/>
    </location>
</feature>
<feature type="chain" id="PRO_0000291981" description="Cell adhesion molecule 4">
    <location>
        <begin position="21"/>
        <end position="388"/>
    </location>
</feature>
<feature type="topological domain" description="Extracellular" evidence="2">
    <location>
        <begin position="25"/>
        <end position="324"/>
    </location>
</feature>
<feature type="transmembrane region" description="Helical" evidence="2">
    <location>
        <begin position="325"/>
        <end position="345"/>
    </location>
</feature>
<feature type="topological domain" description="Cytoplasmic" evidence="2">
    <location>
        <begin position="346"/>
        <end position="388"/>
    </location>
</feature>
<feature type="domain" description="Ig-like V-type">
    <location>
        <begin position="21"/>
        <end position="119"/>
    </location>
</feature>
<feature type="domain" description="Ig-like C2-type 1">
    <location>
        <begin position="124"/>
        <end position="219"/>
    </location>
</feature>
<feature type="domain" description="Ig-like C2-type 2">
    <location>
        <begin position="224"/>
        <end position="307"/>
    </location>
</feature>
<feature type="modified residue" description="Phosphoserine" evidence="7">
    <location>
        <position position="361"/>
    </location>
</feature>
<feature type="glycosylation site" description="N-linked (GlcNAc...) asparagine" evidence="2">
    <location>
        <position position="31"/>
    </location>
</feature>
<feature type="glycosylation site" description="N-linked (GlcNAc...) asparagine" evidence="2">
    <location>
        <position position="67"/>
    </location>
</feature>
<feature type="glycosylation site" description="N-linked (GlcNAc...) asparagine" evidence="2">
    <location>
        <position position="286"/>
    </location>
</feature>
<feature type="disulfide bond" evidence="3">
    <location>
        <begin position="44"/>
        <end position="104"/>
    </location>
</feature>
<feature type="disulfide bond" evidence="3">
    <location>
        <begin position="145"/>
        <end position="199"/>
    </location>
</feature>
<feature type="disulfide bond" evidence="3">
    <location>
        <begin position="245"/>
        <end position="291"/>
    </location>
</feature>
<feature type="strand" evidence="9">
    <location>
        <begin position="26"/>
        <end position="28"/>
    </location>
</feature>
<feature type="strand" evidence="8">
    <location>
        <begin position="30"/>
        <end position="35"/>
    </location>
</feature>
<feature type="strand" evidence="8">
    <location>
        <begin position="40"/>
        <end position="45"/>
    </location>
</feature>
<feature type="strand" evidence="8">
    <location>
        <begin position="54"/>
        <end position="57"/>
    </location>
</feature>
<feature type="strand" evidence="8">
    <location>
        <begin position="63"/>
        <end position="66"/>
    </location>
</feature>
<feature type="strand" evidence="8">
    <location>
        <begin position="77"/>
        <end position="82"/>
    </location>
</feature>
<feature type="strand" evidence="8">
    <location>
        <begin position="84"/>
        <end position="91"/>
    </location>
</feature>
<feature type="helix" evidence="8">
    <location>
        <begin position="96"/>
        <end position="98"/>
    </location>
</feature>
<feature type="strand" evidence="8">
    <location>
        <begin position="100"/>
        <end position="106"/>
    </location>
</feature>
<feature type="turn" evidence="8">
    <location>
        <begin position="107"/>
        <end position="109"/>
    </location>
</feature>
<feature type="strand" evidence="8">
    <location>
        <begin position="113"/>
        <end position="122"/>
    </location>
</feature>
<feature type="strand" evidence="8">
    <location>
        <begin position="128"/>
        <end position="133"/>
    </location>
</feature>
<feature type="strand" evidence="8">
    <location>
        <begin position="139"/>
        <end position="152"/>
    </location>
</feature>
<feature type="strand" evidence="8">
    <location>
        <begin position="155"/>
        <end position="160"/>
    </location>
</feature>
<feature type="strand" evidence="8">
    <location>
        <begin position="163"/>
        <end position="165"/>
    </location>
</feature>
<feature type="strand" evidence="8">
    <location>
        <begin position="168"/>
        <end position="174"/>
    </location>
</feature>
<feature type="strand" evidence="8">
    <location>
        <begin position="177"/>
        <end position="187"/>
    </location>
</feature>
<feature type="helix" evidence="8">
    <location>
        <begin position="190"/>
        <end position="192"/>
    </location>
</feature>
<feature type="strand" evidence="8">
    <location>
        <begin position="196"/>
        <end position="202"/>
    </location>
</feature>
<feature type="strand" evidence="9">
    <location>
        <begin position="204"/>
        <end position="206"/>
    </location>
</feature>
<feature type="strand" evidence="8">
    <location>
        <begin position="212"/>
        <end position="217"/>
    </location>
</feature>
<feature type="strand" evidence="8">
    <location>
        <begin position="220"/>
        <end position="231"/>
    </location>
</feature>
<feature type="strand" evidence="9">
    <location>
        <begin position="233"/>
        <end position="236"/>
    </location>
</feature>
<feature type="strand" evidence="8">
    <location>
        <begin position="241"/>
        <end position="251"/>
    </location>
</feature>
<feature type="strand" evidence="8">
    <location>
        <begin position="257"/>
        <end position="263"/>
    </location>
</feature>
<feature type="strand" evidence="8">
    <location>
        <begin position="270"/>
        <end position="272"/>
    </location>
</feature>
<feature type="strand" evidence="8">
    <location>
        <begin position="275"/>
        <end position="278"/>
    </location>
</feature>
<feature type="helix" evidence="8">
    <location>
        <begin position="283"/>
        <end position="285"/>
    </location>
</feature>
<feature type="strand" evidence="8">
    <location>
        <begin position="287"/>
        <end position="295"/>
    </location>
</feature>
<feature type="strand" evidence="8">
    <location>
        <begin position="298"/>
        <end position="306"/>
    </location>
</feature>
<accession>Q8R464</accession>